<reference key="1">
    <citation type="journal article" date="2006" name="PLoS Genet.">
        <title>The complete genome sequence and comparative genome analysis of the high pathogenicity Yersinia enterocolitica strain 8081.</title>
        <authorList>
            <person name="Thomson N.R."/>
            <person name="Howard S."/>
            <person name="Wren B.W."/>
            <person name="Holden M.T.G."/>
            <person name="Crossman L."/>
            <person name="Challis G.L."/>
            <person name="Churcher C."/>
            <person name="Mungall K."/>
            <person name="Brooks K."/>
            <person name="Chillingworth T."/>
            <person name="Feltwell T."/>
            <person name="Abdellah Z."/>
            <person name="Hauser H."/>
            <person name="Jagels K."/>
            <person name="Maddison M."/>
            <person name="Moule S."/>
            <person name="Sanders M."/>
            <person name="Whitehead S."/>
            <person name="Quail M.A."/>
            <person name="Dougan G."/>
            <person name="Parkhill J."/>
            <person name="Prentice M.B."/>
        </authorList>
    </citation>
    <scope>NUCLEOTIDE SEQUENCE [LARGE SCALE GENOMIC DNA]</scope>
    <source>
        <strain>NCTC 13174 / 8081</strain>
    </source>
</reference>
<name>SYGA_YERE8</name>
<gene>
    <name evidence="1" type="primary">glyQ</name>
    <name type="ordered locus">YE4151</name>
</gene>
<proteinExistence type="inferred from homology"/>
<dbReference type="EC" id="6.1.1.14" evidence="1"/>
<dbReference type="EMBL" id="AM286415">
    <property type="protein sequence ID" value="CAL14167.1"/>
    <property type="molecule type" value="Genomic_DNA"/>
</dbReference>
<dbReference type="RefSeq" id="WP_005175094.1">
    <property type="nucleotide sequence ID" value="NC_008800.1"/>
</dbReference>
<dbReference type="RefSeq" id="YP_001008286.1">
    <property type="nucleotide sequence ID" value="NC_008800.1"/>
</dbReference>
<dbReference type="SMR" id="A1JT51"/>
<dbReference type="GeneID" id="93971211"/>
<dbReference type="KEGG" id="yen:YE4151"/>
<dbReference type="PATRIC" id="fig|393305.7.peg.4419"/>
<dbReference type="eggNOG" id="COG0752">
    <property type="taxonomic scope" value="Bacteria"/>
</dbReference>
<dbReference type="HOGENOM" id="CLU_057066_1_0_6"/>
<dbReference type="OrthoDB" id="9802183at2"/>
<dbReference type="Proteomes" id="UP000000642">
    <property type="component" value="Chromosome"/>
</dbReference>
<dbReference type="GO" id="GO:0005829">
    <property type="term" value="C:cytosol"/>
    <property type="evidence" value="ECO:0007669"/>
    <property type="project" value="TreeGrafter"/>
</dbReference>
<dbReference type="GO" id="GO:0005524">
    <property type="term" value="F:ATP binding"/>
    <property type="evidence" value="ECO:0007669"/>
    <property type="project" value="UniProtKB-UniRule"/>
</dbReference>
<dbReference type="GO" id="GO:0004820">
    <property type="term" value="F:glycine-tRNA ligase activity"/>
    <property type="evidence" value="ECO:0007669"/>
    <property type="project" value="UniProtKB-UniRule"/>
</dbReference>
<dbReference type="GO" id="GO:0006426">
    <property type="term" value="P:glycyl-tRNA aminoacylation"/>
    <property type="evidence" value="ECO:0007669"/>
    <property type="project" value="UniProtKB-UniRule"/>
</dbReference>
<dbReference type="CDD" id="cd00733">
    <property type="entry name" value="GlyRS_alpha_core"/>
    <property type="match status" value="1"/>
</dbReference>
<dbReference type="FunFam" id="1.20.58.180:FF:000001">
    <property type="entry name" value="Glycine--tRNA ligase alpha subunit"/>
    <property type="match status" value="1"/>
</dbReference>
<dbReference type="FunFam" id="3.30.930.10:FF:000006">
    <property type="entry name" value="Glycine--tRNA ligase alpha subunit"/>
    <property type="match status" value="1"/>
</dbReference>
<dbReference type="Gene3D" id="3.30.930.10">
    <property type="entry name" value="Bira Bifunctional Protein, Domain 2"/>
    <property type="match status" value="1"/>
</dbReference>
<dbReference type="Gene3D" id="1.20.58.180">
    <property type="entry name" value="Class II aaRS and biotin synthetases, domain 2"/>
    <property type="match status" value="1"/>
</dbReference>
<dbReference type="HAMAP" id="MF_00254">
    <property type="entry name" value="Gly_tRNA_synth_alpha"/>
    <property type="match status" value="1"/>
</dbReference>
<dbReference type="InterPro" id="IPR045864">
    <property type="entry name" value="aa-tRNA-synth_II/BPL/LPL"/>
</dbReference>
<dbReference type="InterPro" id="IPR006194">
    <property type="entry name" value="Gly-tRNA-synth_heterodimer"/>
</dbReference>
<dbReference type="InterPro" id="IPR002310">
    <property type="entry name" value="Gly-tRNA_ligase_asu"/>
</dbReference>
<dbReference type="NCBIfam" id="TIGR00388">
    <property type="entry name" value="glyQ"/>
    <property type="match status" value="1"/>
</dbReference>
<dbReference type="NCBIfam" id="NF006827">
    <property type="entry name" value="PRK09348.1"/>
    <property type="match status" value="1"/>
</dbReference>
<dbReference type="PANTHER" id="PTHR30075:SF2">
    <property type="entry name" value="GLYCINE--TRNA LIGASE, CHLOROPLASTIC_MITOCHONDRIAL 2"/>
    <property type="match status" value="1"/>
</dbReference>
<dbReference type="PANTHER" id="PTHR30075">
    <property type="entry name" value="GLYCYL-TRNA SYNTHETASE"/>
    <property type="match status" value="1"/>
</dbReference>
<dbReference type="Pfam" id="PF02091">
    <property type="entry name" value="tRNA-synt_2e"/>
    <property type="match status" value="1"/>
</dbReference>
<dbReference type="PRINTS" id="PR01044">
    <property type="entry name" value="TRNASYNTHGA"/>
</dbReference>
<dbReference type="SUPFAM" id="SSF55681">
    <property type="entry name" value="Class II aaRS and biotin synthetases"/>
    <property type="match status" value="1"/>
</dbReference>
<dbReference type="PROSITE" id="PS50861">
    <property type="entry name" value="AA_TRNA_LIGASE_II_GLYAB"/>
    <property type="match status" value="1"/>
</dbReference>
<evidence type="ECO:0000255" key="1">
    <source>
        <dbReference type="HAMAP-Rule" id="MF_00254"/>
    </source>
</evidence>
<sequence>MQKFDTKTFQGLILTLQDYWARQGCTIVQPLDMEVGAGTSHPMTCLRALGPEPIAAAYVQPSRRPTDGRYGENPNRLQHYYQFQVIIKPSPDNIQELYLGSLKELGLDPLIHDIRFVEDNWENPTLGAWGLGWEVWLNGMEVTQFTYFQQVGGLECKPVTGEITYGLERLAMYIQGVDSVYDLIWCDGPLGTTTYGDIYHQNEVEQSTYNFEYADVDFLFSCFEQYEKEAQSLLALEVPLPLPAYERILKAGHTFNLLDARKAISVTERQRYILRIRTLTKAVAEAYYASREALGFPMCKKNQN</sequence>
<organism>
    <name type="scientific">Yersinia enterocolitica serotype O:8 / biotype 1B (strain NCTC 13174 / 8081)</name>
    <dbReference type="NCBI Taxonomy" id="393305"/>
    <lineage>
        <taxon>Bacteria</taxon>
        <taxon>Pseudomonadati</taxon>
        <taxon>Pseudomonadota</taxon>
        <taxon>Gammaproteobacteria</taxon>
        <taxon>Enterobacterales</taxon>
        <taxon>Yersiniaceae</taxon>
        <taxon>Yersinia</taxon>
    </lineage>
</organism>
<accession>A1JT51</accession>
<protein>
    <recommendedName>
        <fullName evidence="1">Glycine--tRNA ligase alpha subunit</fullName>
        <ecNumber evidence="1">6.1.1.14</ecNumber>
    </recommendedName>
    <alternativeName>
        <fullName evidence="1">Glycyl-tRNA synthetase alpha subunit</fullName>
        <shortName evidence="1">GlyRS</shortName>
    </alternativeName>
</protein>
<feature type="chain" id="PRO_1000047532" description="Glycine--tRNA ligase alpha subunit">
    <location>
        <begin position="1"/>
        <end position="304"/>
    </location>
</feature>
<keyword id="KW-0030">Aminoacyl-tRNA synthetase</keyword>
<keyword id="KW-0067">ATP-binding</keyword>
<keyword id="KW-0963">Cytoplasm</keyword>
<keyword id="KW-0436">Ligase</keyword>
<keyword id="KW-0547">Nucleotide-binding</keyword>
<keyword id="KW-0648">Protein biosynthesis</keyword>
<comment type="catalytic activity">
    <reaction evidence="1">
        <text>tRNA(Gly) + glycine + ATP = glycyl-tRNA(Gly) + AMP + diphosphate</text>
        <dbReference type="Rhea" id="RHEA:16013"/>
        <dbReference type="Rhea" id="RHEA-COMP:9664"/>
        <dbReference type="Rhea" id="RHEA-COMP:9683"/>
        <dbReference type="ChEBI" id="CHEBI:30616"/>
        <dbReference type="ChEBI" id="CHEBI:33019"/>
        <dbReference type="ChEBI" id="CHEBI:57305"/>
        <dbReference type="ChEBI" id="CHEBI:78442"/>
        <dbReference type="ChEBI" id="CHEBI:78522"/>
        <dbReference type="ChEBI" id="CHEBI:456215"/>
        <dbReference type="EC" id="6.1.1.14"/>
    </reaction>
</comment>
<comment type="subunit">
    <text evidence="1">Tetramer of two alpha and two beta subunits.</text>
</comment>
<comment type="subcellular location">
    <subcellularLocation>
        <location evidence="1">Cytoplasm</location>
    </subcellularLocation>
</comment>
<comment type="similarity">
    <text evidence="1">Belongs to the class-II aminoacyl-tRNA synthetase family.</text>
</comment>